<keyword id="KW-0002">3D-structure</keyword>
<keyword id="KW-0025">Alternative splicing</keyword>
<keyword id="KW-0965">Cell junction</keyword>
<keyword id="KW-1003">Cell membrane</keyword>
<keyword id="KW-0966">Cell projection</keyword>
<keyword id="KW-0133">Cell shape</keyword>
<keyword id="KW-0963">Cytoplasm</keyword>
<keyword id="KW-0217">Developmental protein</keyword>
<keyword id="KW-0903">Direct protein sequencing</keyword>
<keyword id="KW-0325">Glycoprotein</keyword>
<keyword id="KW-0472">Membrane</keyword>
<keyword id="KW-1267">Proteomics identification</keyword>
<keyword id="KW-1185">Reference proteome</keyword>
<keyword id="KW-0730">Sialic acid</keyword>
<keyword id="KW-0732">Signal</keyword>
<keyword id="KW-0812">Transmembrane</keyword>
<keyword id="KW-1133">Transmembrane helix</keyword>
<comment type="function">
    <text evidence="1 6 9 11 13 14 15 16 17 18 19 20 24 25">Mediates effects on cell migration and adhesion through its different partners. During development plays a role in blood and lymphatic vessels separation by binding CLEC1B, triggering CLEC1B activation in platelets and leading to platelet activation and/or aggregation (PubMed:14522983, PubMed:15231832, PubMed:17222411, PubMed:17616532, PubMed:18215137). Interaction with CD9, on the contrary, attenuates platelet aggregation induced by PDPN (PubMed:18541721). Through MSN or EZR interaction promotes epithelial-mesenchymal transition (EMT) leading to ERZ phosphorylation and triggering RHOA activation leading to cell migration increase and invasiveness (PubMed:17046996, PubMed:21376833). Interaction with CD44 promotes directional cell migration in epithelial and tumor cells (PubMed:20962267). In lymph nodes (LNs), controls fibroblastic reticular cells (FRCs) adhesion to the extracellular matrix (ECM) and contraction of the actomyosin by maintaining ERM proteins (EZR; MSN and RDX) and MYL9 activation through association with unknown transmembrane proteins. Engagement of CLEC1B by PDPN promotes FRCs relaxation by blocking lateral membrane interactions leading to reduction of ERM proteins (EZR; MSN and RDX) and MYL9 activation (By similarity). Through binding with LGALS8 may participate in connection of the lymphatic endothelium to the surrounding extracellular matrix (PubMed:19268462). In keratinocytes, induces changes in cell morphology showing an elongated shape, numerous membrane protrusions, major reorganization of the actin cytoskeleton, increased motility and decreased cell adhesion (PubMed:15515019). Controls invadopodia stability and maturation leading to efficient degradation of the extracellular matrix (ECM) in tumor cells through modulation of RHOC activity in order to activate ROCK1/ROCK2 and LIMK1/LIMK2 and inactivation of CFL1 (PubMed:25486435). Required for normal lung cell proliferation and alveolus formation at birth (By similarity). Does not function as a water channel or as a regulator of aquaporin-type water channels (PubMed:9651190). Does not have any effect on folic acid or amino acid transport (By similarity).</text>
</comment>
<comment type="subunit">
    <text evidence="8 13 15 16 17 18 19 20 21 23">Homodimer (PubMed:21376833). Interacts with CLEC1B; the interaction is independent of CLEC1B glycosylation and activates CLEC1B; the interaction is dependent of sialic acid on O-glycans (PubMed:17616532, PubMed:18215137, PubMed:25458834). Interacts with CD9; this interaction is homophilic and attenuates platelet aggregation and pulmonary metastasis induced by PDPN (PubMed:18541721). Interacts with LGALS8; the interaction is glycosylation-dependent; may participate in connection of the lymphatic endothelium to the surrounding extracellular matrix (PubMed:19268462). Interacts with HSPA9 (PubMed:23541579). Interacts (via extracellular domain) with CD44; this interaction is required for PDPN-mediated directional migration and regulation of lamellipodia extension/stabilization during cell spreading and migration (PubMed:20962267). Interacts (via cytoplasmic domain) with MSN and EZR; activates RHOA and promotes epithelial-mesenchymal transition (PubMed:17046996). Interacts with CCL21; relocalized PDPN to the basolateral membrane (PubMed:14978162).</text>
</comment>
<comment type="interaction">
    <interactant intactId="EBI-723160">
        <id>Q86YL7</id>
    </interactant>
    <interactant intactId="EBI-16130833">
        <id>Q9P126-1</id>
        <label>CLEC1B</label>
    </interactant>
    <organismsDiffer>false</organismsDiffer>
    <experiments>2</experiments>
</comment>
<comment type="interaction">
    <interactant intactId="EBI-723160">
        <id>Q86YL7</id>
    </interactant>
    <interactant intactId="EBI-8638294">
        <id>Q9NUH8</id>
        <label>TMEM14B</label>
    </interactant>
    <organismsDiffer>false</organismsDiffer>
    <experiments>3</experiments>
</comment>
<comment type="subcellular location">
    <molecule>Podoplanin</molecule>
    <subcellularLocation>
        <location evidence="13 19 38">Membrane</location>
        <topology evidence="1">Single-pass type I membrane protein</topology>
    </subcellularLocation>
    <subcellularLocation>
        <location evidence="13 19">Cell projection</location>
        <location evidence="13 19">Lamellipodium membrane</location>
        <topology evidence="1">Single-pass type I membrane protein</topology>
    </subcellularLocation>
    <subcellularLocation>
        <location evidence="13">Cell projection</location>
        <location evidence="13">Filopodium membrane</location>
        <topology evidence="1">Single-pass type I membrane protein</topology>
    </subcellularLocation>
    <subcellularLocation>
        <location evidence="13">Cell projection</location>
        <location evidence="13">Microvillus membrane</location>
        <topology evidence="1">Single-pass type I membrane protein</topology>
    </subcellularLocation>
    <subcellularLocation>
        <location evidence="13">Cell projection</location>
        <location evidence="13">Ruffle membrane</location>
        <topology evidence="1">Single-pass type I membrane protein</topology>
    </subcellularLocation>
    <subcellularLocation>
        <location evidence="20">Membrane raft</location>
    </subcellularLocation>
    <subcellularLocation>
        <location evidence="19">Apical cell membrane</location>
    </subcellularLocation>
    <subcellularLocation>
        <location evidence="8">Basolateral cell membrane</location>
    </subcellularLocation>
    <subcellularLocation>
        <location evidence="24">Cell projection</location>
        <location evidence="24">Invadopodium</location>
    </subcellularLocation>
    <text evidence="1 17 20 24">Localized to actin-rich microvilli and plasma membrane projections such as filopodia, lamellipodia and ruffles (By similarity). Association to the lipid rafts is required for PDPN-induced epithelial to mesenchymal transition (EMT) (PubMed:21376833). Colocalizes with CD9 in tetraspanin microdomains (PubMed:18541721). Localized at invadopodium adhesion rings in tumor cell. Association to the lipid rafts is essential for PDPN recruitment to invadopodia and ECM degradation (PubMed:25486435).</text>
</comment>
<comment type="subcellular location">
    <molecule>29kDa cytosolic podoplanin intracellular domain</molecule>
    <subcellularLocation>
        <location evidence="22">Cytoplasm</location>
        <location evidence="22">Cytosol</location>
    </subcellularLocation>
</comment>
<comment type="alternative products">
    <event type="alternative splicing"/>
    <isoform>
        <id>Q86YL7-1</id>
        <name evidence="25">1</name>
        <name evidence="34">hT1alpha-2</name>
        <sequence type="displayed"/>
    </isoform>
    <isoform>
        <id>Q86YL7-2</id>
        <name evidence="25">2</name>
        <name evidence="34">hT1alpha-1</name>
        <sequence type="described" ref="VSP_051949 VSP_051950 VSP_051951"/>
    </isoform>
    <isoform>
        <id>Q86YL7-3</id>
        <name>3</name>
        <sequence type="described" ref="VSP_035753"/>
    </isoform>
    <isoform>
        <id>Q86YL7-4</id>
        <name>4</name>
        <sequence type="described" ref="VSP_035753 VSP_035754"/>
    </isoform>
    <isoform>
        <id>Q86YL7-5</id>
        <name>5</name>
        <sequence type="described" ref="VSP_046799 VSP_046800"/>
    </isoform>
    <isoform>
        <id>Q86YL7-6</id>
        <name>6</name>
        <sequence type="described" ref="VSP_046799"/>
    </isoform>
</comment>
<comment type="tissue specificity">
    <text evidence="5 6 11">Highly expressed in placenta, lung, skeletal muscle and brain. Weakly expressed in brain, kidney and liver. In placenta, expressed on the apical plasma membrane of endothelium. In lung, expressed in alveolar epithelium. Up-regulated in colorectal tumors and expressed in 25% of early oral squamous cell carcinomas.</text>
</comment>
<comment type="domain">
    <text evidence="1 24">The cytoplasmic domain controls FRC elongation but is dispensable for contraction (By similarity). The cytoplasmic domain is essential for recruitment to invadopodia and ECM degradation (PubMed:25486435).</text>
</comment>
<comment type="PTM">
    <text evidence="5 9 11 14 23">Extensively O-glycosylated. Contains sialic acid residues. O-glycosylation is necessary for platelet aggregation activity. Disialylated at Thr-52; sialic acid is critical for platelet-aggregating activity and for CLEC1B interaction (PubMed:17222411, PubMed:25458834).</text>
</comment>
<comment type="PTM">
    <text evidence="2">The N-terminus is blocked.</text>
</comment>
<comment type="PTM">
    <text evidence="22">Cleaved by a metalloprotease within its extracellular (EC) domain, generating a membrane-bound C-terminal fragment (PCTF33) and an extracellular fragment. The resulting membrane-bound C-terminal fragment (PCTF33) is further processed between Val-150 and Val-151 by PSEN1/gamma-secretase generating the intracellular domain of podoplanin (PICD).</text>
</comment>
<comment type="similarity">
    <text evidence="3">Belongs to the podoplanin family.</text>
</comment>
<comment type="sequence caution" evidence="37">
    <conflict type="erroneous initiation">
        <sequence resource="EMBL-CDS" id="AAM73655"/>
    </conflict>
    <text>Truncated N-terminus.</text>
</comment>
<comment type="sequence caution" evidence="37">
    <conflict type="erroneous initiation">
        <sequence resource="EMBL-CDS" id="AAO22143"/>
    </conflict>
    <text>Truncated N-terminus.</text>
</comment>
<comment type="sequence caution" evidence="37">
    <conflict type="erroneous initiation">
        <sequence resource="EMBL-CDS" id="BAC11550"/>
    </conflict>
    <text>Truncated N-terminus.</text>
</comment>
<comment type="sequence caution" evidence="37">
    <conflict type="erroneous initiation">
        <sequence resource="EMBL-CDS" id="BAC11557"/>
    </conflict>
    <text>Truncated N-terminus.</text>
</comment>
<comment type="sequence caution" evidence="37">
    <conflict type="erroneous initiation">
        <sequence resource="EMBL-CDS" id="BAG35495"/>
    </conflict>
    <text>Truncated N-terminus.</text>
</comment>
<name>PDPN_HUMAN</name>
<dbReference type="EMBL" id="AF030427">
    <property type="protein sequence ID" value="AAD01899.1"/>
    <property type="molecule type" value="mRNA"/>
</dbReference>
<dbReference type="EMBL" id="AF030428">
    <property type="protein sequence ID" value="AAD01900.1"/>
    <property type="molecule type" value="mRNA"/>
</dbReference>
<dbReference type="EMBL" id="AJ225022">
    <property type="protein sequence ID" value="CAA12352.1"/>
    <property type="molecule type" value="mRNA"/>
</dbReference>
<dbReference type="EMBL" id="AB127958">
    <property type="protein sequence ID" value="BAD04046.1"/>
    <property type="molecule type" value="mRNA"/>
</dbReference>
<dbReference type="EMBL" id="AL354712">
    <property type="status" value="NOT_ANNOTATED_CDS"/>
    <property type="molecule type" value="Genomic_DNA"/>
</dbReference>
<dbReference type="EMBL" id="AL359771">
    <property type="status" value="NOT_ANNOTATED_CDS"/>
    <property type="molecule type" value="Genomic_DNA"/>
</dbReference>
<dbReference type="EMBL" id="BC014668">
    <property type="protein sequence ID" value="AAH14668.2"/>
    <property type="molecule type" value="mRNA"/>
</dbReference>
<dbReference type="EMBL" id="BC022812">
    <property type="protein sequence ID" value="AAH22812.2"/>
    <property type="molecule type" value="mRNA"/>
</dbReference>
<dbReference type="EMBL" id="AY194238">
    <property type="protein sequence ID" value="AAO22143.1"/>
    <property type="status" value="ALT_INIT"/>
    <property type="molecule type" value="mRNA"/>
</dbReference>
<dbReference type="EMBL" id="AK312607">
    <property type="protein sequence ID" value="BAG35495.1"/>
    <property type="status" value="ALT_INIT"/>
    <property type="molecule type" value="mRNA"/>
</dbReference>
<dbReference type="EMBL" id="AK075327">
    <property type="protein sequence ID" value="BAC11550.1"/>
    <property type="status" value="ALT_INIT"/>
    <property type="molecule type" value="mRNA"/>
</dbReference>
<dbReference type="EMBL" id="AK075345">
    <property type="protein sequence ID" value="BAC11557.1"/>
    <property type="status" value="ALT_INIT"/>
    <property type="molecule type" value="mRNA"/>
</dbReference>
<dbReference type="EMBL" id="AF390106">
    <property type="protein sequence ID" value="AAM73655.1"/>
    <property type="status" value="ALT_INIT"/>
    <property type="molecule type" value="mRNA"/>
</dbReference>
<dbReference type="CCDS" id="CCDS30602.2">
    <molecule id="Q86YL7-1"/>
</dbReference>
<dbReference type="CCDS" id="CCDS41266.1">
    <molecule id="Q86YL7-4"/>
</dbReference>
<dbReference type="CCDS" id="CCDS44060.1">
    <molecule id="Q86YL7-6"/>
</dbReference>
<dbReference type="CCDS" id="CCDS53270.1">
    <molecule id="Q86YL7-5"/>
</dbReference>
<dbReference type="RefSeq" id="NP_001006625.1">
    <molecule id="Q86YL7-6"/>
    <property type="nucleotide sequence ID" value="NM_001006624.2"/>
</dbReference>
<dbReference type="RefSeq" id="NP_001006626.1">
    <molecule id="Q86YL7-5"/>
    <property type="nucleotide sequence ID" value="NM_001006625.2"/>
</dbReference>
<dbReference type="RefSeq" id="NP_001371982.1">
    <molecule id="Q86YL7-5"/>
    <property type="nucleotide sequence ID" value="NM_001385053.1"/>
</dbReference>
<dbReference type="RefSeq" id="NP_006465.3">
    <molecule id="Q86YL7-1"/>
    <property type="nucleotide sequence ID" value="NM_006474.4"/>
</dbReference>
<dbReference type="RefSeq" id="NP_938203.2">
    <molecule id="Q86YL7-4"/>
    <property type="nucleotide sequence ID" value="NM_198389.2"/>
</dbReference>
<dbReference type="RefSeq" id="XP_006710358.1">
    <molecule id="Q86YL7-6"/>
    <property type="nucleotide sequence ID" value="XM_006710295.2"/>
</dbReference>
<dbReference type="RefSeq" id="XP_024307172.1">
    <molecule id="Q86YL7-6"/>
    <property type="nucleotide sequence ID" value="XM_024451404.2"/>
</dbReference>
<dbReference type="RefSeq" id="XP_047290427.1">
    <molecule id="Q86YL7-5"/>
    <property type="nucleotide sequence ID" value="XM_047434471.1"/>
</dbReference>
<dbReference type="PDB" id="3WSR">
    <property type="method" value="X-ray"/>
    <property type="resolution" value="1.91 A"/>
    <property type="chains" value="C/D=38-54"/>
</dbReference>
<dbReference type="PDB" id="4YO0">
    <property type="method" value="X-ray"/>
    <property type="resolution" value="1.56 A"/>
    <property type="chains" value="E/F=38-51"/>
</dbReference>
<dbReference type="PDB" id="5XCV">
    <property type="method" value="X-ray"/>
    <property type="resolution" value="2.14 A"/>
    <property type="chains" value="C/F=38-51"/>
</dbReference>
<dbReference type="PDB" id="7C94">
    <property type="method" value="X-ray"/>
    <property type="resolution" value="2.84 A"/>
    <property type="chains" value="C/F=67-84"/>
</dbReference>
<dbReference type="PDB" id="7CQC">
    <property type="method" value="X-ray"/>
    <property type="resolution" value="2.50 A"/>
    <property type="chains" value="A=38-51"/>
</dbReference>
<dbReference type="PDB" id="7CQD">
    <property type="method" value="X-ray"/>
    <property type="resolution" value="3.20 A"/>
    <property type="chains" value="A/B=38-51"/>
</dbReference>
<dbReference type="PDBsum" id="3WSR"/>
<dbReference type="PDBsum" id="4YO0"/>
<dbReference type="PDBsum" id="5XCV"/>
<dbReference type="PDBsum" id="7C94"/>
<dbReference type="PDBsum" id="7CQC"/>
<dbReference type="PDBsum" id="7CQD"/>
<dbReference type="SMR" id="Q86YL7"/>
<dbReference type="BioGRID" id="115874">
    <property type="interactions" value="18"/>
</dbReference>
<dbReference type="DIP" id="DIP-61333N"/>
<dbReference type="FunCoup" id="Q86YL7">
    <property type="interactions" value="74"/>
</dbReference>
<dbReference type="IntAct" id="Q86YL7">
    <property type="interactions" value="16"/>
</dbReference>
<dbReference type="STRING" id="9606.ENSP00000294489"/>
<dbReference type="TCDB" id="8.A.128.8.1">
    <property type="family name" value="the signaling adaptor protein karap/dap12/tyrobp (sap) family"/>
</dbReference>
<dbReference type="GlyCosmos" id="Q86YL7">
    <property type="glycosylation" value="25 sites, 2 glycans"/>
</dbReference>
<dbReference type="GlyGen" id="Q86YL7">
    <property type="glycosylation" value="26 sites, 4 O-linked glycans (3 sites)"/>
</dbReference>
<dbReference type="iPTMnet" id="Q86YL7"/>
<dbReference type="PhosphoSitePlus" id="Q86YL7"/>
<dbReference type="BioMuta" id="PDPN"/>
<dbReference type="DMDM" id="215274223"/>
<dbReference type="jPOST" id="Q86YL7"/>
<dbReference type="MassIVE" id="Q86YL7"/>
<dbReference type="PaxDb" id="9606-ENSP00000294489"/>
<dbReference type="PeptideAtlas" id="Q86YL7"/>
<dbReference type="ProteomicsDB" id="19157"/>
<dbReference type="ProteomicsDB" id="27867"/>
<dbReference type="ProteomicsDB" id="70429">
    <molecule id="Q86YL7-1"/>
</dbReference>
<dbReference type="ProteomicsDB" id="70431">
    <molecule id="Q86YL7-3"/>
</dbReference>
<dbReference type="ProteomicsDB" id="70432">
    <molecule id="Q86YL7-4"/>
</dbReference>
<dbReference type="Pumba" id="Q86YL7"/>
<dbReference type="ABCD" id="Q86YL7">
    <property type="antibodies" value="8 sequenced antibodies"/>
</dbReference>
<dbReference type="Antibodypedia" id="764">
    <property type="antibodies" value="1356 antibodies from 50 providers"/>
</dbReference>
<dbReference type="DNASU" id="10630"/>
<dbReference type="Ensembl" id="ENST00000294489.10">
    <molecule id="Q86YL7-3"/>
    <property type="protein sequence ID" value="ENSP00000294489.6"/>
    <property type="gene ID" value="ENSG00000162493.17"/>
</dbReference>
<dbReference type="Ensembl" id="ENST00000376057.8">
    <molecule id="Q86YL7-4"/>
    <property type="protein sequence ID" value="ENSP00000365225.4"/>
    <property type="gene ID" value="ENSG00000162493.17"/>
</dbReference>
<dbReference type="Ensembl" id="ENST00000376061.8">
    <molecule id="Q86YL7-6"/>
    <property type="protein sequence ID" value="ENSP00000365229.4"/>
    <property type="gene ID" value="ENSG00000162493.17"/>
</dbReference>
<dbReference type="Ensembl" id="ENST00000475043.5">
    <molecule id="Q86YL7-5"/>
    <property type="protein sequence ID" value="ENSP00000426063.1"/>
    <property type="gene ID" value="ENSG00000162493.17"/>
</dbReference>
<dbReference type="Ensembl" id="ENST00000487038.5">
    <molecule id="Q86YL7-6"/>
    <property type="protein sequence ID" value="ENSP00000427537.1"/>
    <property type="gene ID" value="ENSG00000162493.17"/>
</dbReference>
<dbReference type="Ensembl" id="ENST00000513143.5">
    <molecule id="Q86YL7-6"/>
    <property type="protein sequence ID" value="ENSP00000425304.1"/>
    <property type="gene ID" value="ENSG00000162493.17"/>
</dbReference>
<dbReference type="Ensembl" id="ENST00000621990.5">
    <molecule id="Q86YL7-1"/>
    <property type="protein sequence ID" value="ENSP00000478125.1"/>
    <property type="gene ID" value="ENSG00000162493.17"/>
</dbReference>
<dbReference type="GeneID" id="10630"/>
<dbReference type="KEGG" id="hsa:10630"/>
<dbReference type="MANE-Select" id="ENST00000621990.5">
    <property type="protein sequence ID" value="ENSP00000478125.1"/>
    <property type="RefSeq nucleotide sequence ID" value="NM_006474.5"/>
    <property type="RefSeq protein sequence ID" value="NP_006465.4"/>
</dbReference>
<dbReference type="UCSC" id="uc001avc.4">
    <molecule id="Q86YL7-1"/>
    <property type="organism name" value="human"/>
</dbReference>
<dbReference type="AGR" id="HGNC:29602"/>
<dbReference type="CTD" id="10630"/>
<dbReference type="DisGeNET" id="10630"/>
<dbReference type="GeneCards" id="PDPN"/>
<dbReference type="HGNC" id="HGNC:29602">
    <property type="gene designation" value="PDPN"/>
</dbReference>
<dbReference type="HPA" id="ENSG00000162493">
    <property type="expression patterns" value="Tissue enhanced (placenta)"/>
</dbReference>
<dbReference type="MalaCards" id="PDPN"/>
<dbReference type="MIM" id="608863">
    <property type="type" value="gene"/>
</dbReference>
<dbReference type="neXtProt" id="NX_Q86YL7"/>
<dbReference type="OpenTargets" id="ENSG00000162493"/>
<dbReference type="Orphanet" id="1606">
    <property type="disease" value="1p36 deletion syndrome"/>
</dbReference>
<dbReference type="PharmGKB" id="PA142671187"/>
<dbReference type="VEuPathDB" id="HostDB:ENSG00000162493"/>
<dbReference type="eggNOG" id="ENOG502QRWU">
    <property type="taxonomic scope" value="Eukaryota"/>
</dbReference>
<dbReference type="GeneTree" id="ENSGT00390000000013"/>
<dbReference type="HOGENOM" id="CLU_102220_0_0_1"/>
<dbReference type="InParanoid" id="Q86YL7"/>
<dbReference type="OrthoDB" id="9633724at2759"/>
<dbReference type="PAN-GO" id="Q86YL7">
    <property type="GO annotations" value="20 GO annotations based on evolutionary models"/>
</dbReference>
<dbReference type="PhylomeDB" id="Q86YL7"/>
<dbReference type="TreeFam" id="TF337068"/>
<dbReference type="PathwayCommons" id="Q86YL7"/>
<dbReference type="Reactome" id="R-HSA-114604">
    <property type="pathway name" value="GPVI-mediated activation cascade"/>
</dbReference>
<dbReference type="Reactome" id="R-HSA-9827857">
    <property type="pathway name" value="Specification of primordial germ cells"/>
</dbReference>
<dbReference type="SignaLink" id="Q86YL7"/>
<dbReference type="BioGRID-ORCS" id="10630">
    <property type="hits" value="9 hits in 1163 CRISPR screens"/>
</dbReference>
<dbReference type="ChiTaRS" id="PDPN">
    <property type="organism name" value="human"/>
</dbReference>
<dbReference type="EvolutionaryTrace" id="Q86YL7"/>
<dbReference type="GeneWiki" id="PDPN"/>
<dbReference type="GenomeRNAi" id="10630"/>
<dbReference type="Pharos" id="Q86YL7">
    <property type="development level" value="Tbio"/>
</dbReference>
<dbReference type="PRO" id="PR:Q86YL7"/>
<dbReference type="Proteomes" id="UP000005640">
    <property type="component" value="Chromosome 1"/>
</dbReference>
<dbReference type="RNAct" id="Q86YL7">
    <property type="molecule type" value="protein"/>
</dbReference>
<dbReference type="Bgee" id="ENSG00000162493">
    <property type="expression patterns" value="Expressed in tibia and 167 other cell types or tissues"/>
</dbReference>
<dbReference type="ExpressionAtlas" id="Q86YL7">
    <property type="expression patterns" value="baseline and differential"/>
</dbReference>
<dbReference type="GO" id="GO:0070161">
    <property type="term" value="C:anchoring junction"/>
    <property type="evidence" value="ECO:0007669"/>
    <property type="project" value="UniProtKB-KW"/>
</dbReference>
<dbReference type="GO" id="GO:0016324">
    <property type="term" value="C:apical plasma membrane"/>
    <property type="evidence" value="ECO:0000314"/>
    <property type="project" value="UniProtKB"/>
</dbReference>
<dbReference type="GO" id="GO:0016323">
    <property type="term" value="C:basolateral plasma membrane"/>
    <property type="evidence" value="ECO:0000314"/>
    <property type="project" value="UniProtKB"/>
</dbReference>
<dbReference type="GO" id="GO:0030054">
    <property type="term" value="C:cell junction"/>
    <property type="evidence" value="ECO:0000314"/>
    <property type="project" value="HPA"/>
</dbReference>
<dbReference type="GO" id="GO:0042995">
    <property type="term" value="C:cell projection"/>
    <property type="evidence" value="ECO:0000314"/>
    <property type="project" value="UniProtKB"/>
</dbReference>
<dbReference type="GO" id="GO:0031410">
    <property type="term" value="C:cytoplasmic vesicle"/>
    <property type="evidence" value="ECO:0000314"/>
    <property type="project" value="UniProtKB"/>
</dbReference>
<dbReference type="GO" id="GO:0005829">
    <property type="term" value="C:cytosol"/>
    <property type="evidence" value="ECO:0000314"/>
    <property type="project" value="UniProtKB"/>
</dbReference>
<dbReference type="GO" id="GO:0030175">
    <property type="term" value="C:filopodium"/>
    <property type="evidence" value="ECO:0000250"/>
    <property type="project" value="UniProtKB"/>
</dbReference>
<dbReference type="GO" id="GO:0031527">
    <property type="term" value="C:filopodium membrane"/>
    <property type="evidence" value="ECO:0000314"/>
    <property type="project" value="UniProtKB"/>
</dbReference>
<dbReference type="GO" id="GO:0030027">
    <property type="term" value="C:lamellipodium"/>
    <property type="evidence" value="ECO:0000250"/>
    <property type="project" value="UniProtKB"/>
</dbReference>
<dbReference type="GO" id="GO:0031258">
    <property type="term" value="C:lamellipodium membrane"/>
    <property type="evidence" value="ECO:0000314"/>
    <property type="project" value="UniProtKB"/>
</dbReference>
<dbReference type="GO" id="GO:0061851">
    <property type="term" value="C:leading edge of lamellipodium"/>
    <property type="evidence" value="ECO:0000314"/>
    <property type="project" value="UniProtKB"/>
</dbReference>
<dbReference type="GO" id="GO:0016020">
    <property type="term" value="C:membrane"/>
    <property type="evidence" value="ECO:0000314"/>
    <property type="project" value="UniProtKB"/>
</dbReference>
<dbReference type="GO" id="GO:0045121">
    <property type="term" value="C:membrane raft"/>
    <property type="evidence" value="ECO:0000314"/>
    <property type="project" value="UniProtKB"/>
</dbReference>
<dbReference type="GO" id="GO:0031528">
    <property type="term" value="C:microvillus membrane"/>
    <property type="evidence" value="ECO:0000314"/>
    <property type="project" value="UniProtKB"/>
</dbReference>
<dbReference type="GO" id="GO:0005739">
    <property type="term" value="C:mitochondrion"/>
    <property type="evidence" value="ECO:0000314"/>
    <property type="project" value="HPA"/>
</dbReference>
<dbReference type="GO" id="GO:0005886">
    <property type="term" value="C:plasma membrane"/>
    <property type="evidence" value="ECO:0000314"/>
    <property type="project" value="HPA"/>
</dbReference>
<dbReference type="GO" id="GO:0001726">
    <property type="term" value="C:ruffle"/>
    <property type="evidence" value="ECO:0000250"/>
    <property type="project" value="UniProtKB"/>
</dbReference>
<dbReference type="GO" id="GO:0032587">
    <property type="term" value="C:ruffle membrane"/>
    <property type="evidence" value="ECO:0000314"/>
    <property type="project" value="UniProtKB"/>
</dbReference>
<dbReference type="GO" id="GO:0097197">
    <property type="term" value="C:tetraspanin-enriched microdomain"/>
    <property type="evidence" value="ECO:0000314"/>
    <property type="project" value="UniProtKB"/>
</dbReference>
<dbReference type="GO" id="GO:0019956">
    <property type="term" value="F:chemokine binding"/>
    <property type="evidence" value="ECO:0000353"/>
    <property type="project" value="UniProtKB"/>
</dbReference>
<dbReference type="GO" id="GO:0051087">
    <property type="term" value="F:protein-folding chaperone binding"/>
    <property type="evidence" value="ECO:0000353"/>
    <property type="project" value="UniProtKB"/>
</dbReference>
<dbReference type="GO" id="GO:0005102">
    <property type="term" value="F:signaling receptor binding"/>
    <property type="evidence" value="ECO:0000314"/>
    <property type="project" value="UniProtKB"/>
</dbReference>
<dbReference type="GO" id="GO:0070252">
    <property type="term" value="P:actin-mediated cell contraction"/>
    <property type="evidence" value="ECO:0000250"/>
    <property type="project" value="UniProtKB"/>
</dbReference>
<dbReference type="GO" id="GO:0007155">
    <property type="term" value="P:cell adhesion"/>
    <property type="evidence" value="ECO:0000318"/>
    <property type="project" value="GO_Central"/>
</dbReference>
<dbReference type="GO" id="GO:0016477">
    <property type="term" value="P:cell migration"/>
    <property type="evidence" value="ECO:0000250"/>
    <property type="project" value="UniProtKB"/>
</dbReference>
<dbReference type="GO" id="GO:0030324">
    <property type="term" value="P:lung development"/>
    <property type="evidence" value="ECO:0000250"/>
    <property type="project" value="UniProtKB"/>
</dbReference>
<dbReference type="GO" id="GO:0048535">
    <property type="term" value="P:lymph node development"/>
    <property type="evidence" value="ECO:0000250"/>
    <property type="project" value="UniProtKB"/>
</dbReference>
<dbReference type="GO" id="GO:0001946">
    <property type="term" value="P:lymphangiogenesis"/>
    <property type="evidence" value="ECO:0000250"/>
    <property type="project" value="UniProtKB"/>
</dbReference>
<dbReference type="GO" id="GO:0060838">
    <property type="term" value="P:lymphatic endothelial cell fate commitment"/>
    <property type="evidence" value="ECO:0000250"/>
    <property type="project" value="UniProtKB"/>
</dbReference>
<dbReference type="GO" id="GO:0043066">
    <property type="term" value="P:negative regulation of apoptotic process"/>
    <property type="evidence" value="ECO:0000250"/>
    <property type="project" value="UniProtKB"/>
</dbReference>
<dbReference type="GO" id="GO:0008285">
    <property type="term" value="P:negative regulation of cell population proliferation"/>
    <property type="evidence" value="ECO:0000250"/>
    <property type="project" value="UniProtKB"/>
</dbReference>
<dbReference type="GO" id="GO:0030168">
    <property type="term" value="P:platelet activation"/>
    <property type="evidence" value="ECO:0000304"/>
    <property type="project" value="UniProtKB"/>
</dbReference>
<dbReference type="GO" id="GO:0030335">
    <property type="term" value="P:positive regulation of cell migration"/>
    <property type="evidence" value="ECO:0000315"/>
    <property type="project" value="UniProtKB"/>
</dbReference>
<dbReference type="GO" id="GO:0010718">
    <property type="term" value="P:positive regulation of epithelial to mesenchymal transition"/>
    <property type="evidence" value="ECO:0000315"/>
    <property type="project" value="UniProtKB"/>
</dbReference>
<dbReference type="GO" id="GO:0090091">
    <property type="term" value="P:positive regulation of extracellular matrix disassembly"/>
    <property type="evidence" value="ECO:0000314"/>
    <property type="project" value="UniProtKB"/>
</dbReference>
<dbReference type="GO" id="GO:1901731">
    <property type="term" value="P:positive regulation of platelet aggregation"/>
    <property type="evidence" value="ECO:0000314"/>
    <property type="project" value="UniProtKB"/>
</dbReference>
<dbReference type="GO" id="GO:0008360">
    <property type="term" value="P:regulation of cell shape"/>
    <property type="evidence" value="ECO:0007669"/>
    <property type="project" value="UniProtKB-KW"/>
</dbReference>
<dbReference type="GO" id="GO:2000392">
    <property type="term" value="P:regulation of lamellipodium morphogenesis"/>
    <property type="evidence" value="ECO:0000315"/>
    <property type="project" value="UniProtKB"/>
</dbReference>
<dbReference type="GO" id="GO:1904328">
    <property type="term" value="P:regulation of myofibroblast contraction"/>
    <property type="evidence" value="ECO:0000250"/>
    <property type="project" value="UniProtKB"/>
</dbReference>
<dbReference type="GO" id="GO:1900024">
    <property type="term" value="P:regulation of substrate adhesion-dependent cell spreading"/>
    <property type="evidence" value="ECO:0000250"/>
    <property type="project" value="UniProtKB"/>
</dbReference>
<dbReference type="GO" id="GO:0007266">
    <property type="term" value="P:Rho protein signal transduction"/>
    <property type="evidence" value="ECO:0000315"/>
    <property type="project" value="UniProtKB"/>
</dbReference>
<dbReference type="GO" id="GO:0007165">
    <property type="term" value="P:signal transduction"/>
    <property type="evidence" value="ECO:0000318"/>
    <property type="project" value="GO_Central"/>
</dbReference>
<dbReference type="GO" id="GO:0044319">
    <property type="term" value="P:wound healing, spreading of cells"/>
    <property type="evidence" value="ECO:0000315"/>
    <property type="project" value="UniProtKB"/>
</dbReference>
<dbReference type="InterPro" id="IPR052684">
    <property type="entry name" value="Podoplanin_domain"/>
</dbReference>
<dbReference type="PANTHER" id="PTHR47390">
    <property type="entry name" value="PODOPLANIN"/>
    <property type="match status" value="1"/>
</dbReference>
<dbReference type="PANTHER" id="PTHR47390:SF1">
    <property type="entry name" value="PODOPLANIN"/>
    <property type="match status" value="1"/>
</dbReference>
<dbReference type="Pfam" id="PF05808">
    <property type="entry name" value="Podoplanin"/>
    <property type="match status" value="1"/>
</dbReference>
<sequence>MWKVSALLFVLGSASLWVLAEGASTGQPEDDTETTGLEGGVAMPGAEDDVVTPGTSEDRYKSGLTTLVATSVNSVTGIRIEDLPTSESTVHAQEQSPSATASNVATSHSTEKVDGDTQTTVEKDGLSTVTLVGIIVGVLLAIGFIGAIIVVVMRKMSGRYSP</sequence>
<proteinExistence type="evidence at protein level"/>
<evidence type="ECO:0000250" key="1">
    <source>
        <dbReference type="UniProtKB" id="Q62011"/>
    </source>
</evidence>
<evidence type="ECO:0000250" key="2">
    <source>
        <dbReference type="UniProtKB" id="Q64294"/>
    </source>
</evidence>
<evidence type="ECO:0000255" key="3"/>
<evidence type="ECO:0000256" key="4">
    <source>
        <dbReference type="SAM" id="MobiDB-lite"/>
    </source>
</evidence>
<evidence type="ECO:0000269" key="5">
    <source>
    </source>
</evidence>
<evidence type="ECO:0000269" key="6">
    <source>
    </source>
</evidence>
<evidence type="ECO:0000269" key="7">
    <source>
    </source>
</evidence>
<evidence type="ECO:0000269" key="8">
    <source>
    </source>
</evidence>
<evidence type="ECO:0000269" key="9">
    <source>
    </source>
</evidence>
<evidence type="ECO:0000269" key="10">
    <source>
    </source>
</evidence>
<evidence type="ECO:0000269" key="11">
    <source>
    </source>
</evidence>
<evidence type="ECO:0000269" key="12">
    <source>
    </source>
</evidence>
<evidence type="ECO:0000269" key="13">
    <source>
    </source>
</evidence>
<evidence type="ECO:0000269" key="14">
    <source>
    </source>
</evidence>
<evidence type="ECO:0000269" key="15">
    <source>
    </source>
</evidence>
<evidence type="ECO:0000269" key="16">
    <source>
    </source>
</evidence>
<evidence type="ECO:0000269" key="17">
    <source>
    </source>
</evidence>
<evidence type="ECO:0000269" key="18">
    <source>
    </source>
</evidence>
<evidence type="ECO:0000269" key="19">
    <source>
    </source>
</evidence>
<evidence type="ECO:0000269" key="20">
    <source>
    </source>
</evidence>
<evidence type="ECO:0000269" key="21">
    <source>
    </source>
</evidence>
<evidence type="ECO:0000269" key="22">
    <source>
    </source>
</evidence>
<evidence type="ECO:0000269" key="23">
    <source>
    </source>
</evidence>
<evidence type="ECO:0000269" key="24">
    <source>
    </source>
</evidence>
<evidence type="ECO:0000269" key="25">
    <source>
    </source>
</evidence>
<evidence type="ECO:0000269" key="26">
    <source ref="3"/>
</evidence>
<evidence type="ECO:0000269" key="27">
    <source ref="9"/>
</evidence>
<evidence type="ECO:0000303" key="28">
    <source>
    </source>
</evidence>
<evidence type="ECO:0000303" key="29">
    <source>
    </source>
</evidence>
<evidence type="ECO:0000303" key="30">
    <source>
    </source>
</evidence>
<evidence type="ECO:0000303" key="31">
    <source>
    </source>
</evidence>
<evidence type="ECO:0000303" key="32">
    <source>
    </source>
</evidence>
<evidence type="ECO:0000303" key="33">
    <source>
    </source>
</evidence>
<evidence type="ECO:0000303" key="34">
    <source>
    </source>
</evidence>
<evidence type="ECO:0000303" key="35">
    <source ref="3"/>
</evidence>
<evidence type="ECO:0000303" key="36">
    <source ref="9"/>
</evidence>
<evidence type="ECO:0000305" key="37"/>
<evidence type="ECO:0000305" key="38">
    <source>
    </source>
</evidence>
<evidence type="ECO:0000312" key="39">
    <source>
        <dbReference type="EMBL" id="AAD01900.1"/>
    </source>
</evidence>
<evidence type="ECO:0000312" key="40">
    <source>
        <dbReference type="EMBL" id="AAH14668.2"/>
    </source>
</evidence>
<evidence type="ECO:0000312" key="41">
    <source>
        <dbReference type="EMBL" id="AAM73655.1"/>
    </source>
</evidence>
<evidence type="ECO:0000312" key="42">
    <source>
        <dbReference type="EMBL" id="AAO22143.1"/>
    </source>
</evidence>
<evidence type="ECO:0000312" key="43">
    <source>
        <dbReference type="EMBL" id="BAD04046.1"/>
    </source>
</evidence>
<evidence type="ECO:0000312" key="44">
    <source>
        <dbReference type="EMBL" id="CAA12352.1"/>
    </source>
</evidence>
<evidence type="ECO:0007744" key="45">
    <source>
        <dbReference type="PDB" id="3WSR"/>
    </source>
</evidence>
<evidence type="ECO:0007744" key="46">
    <source>
        <dbReference type="PDB" id="4YO0"/>
    </source>
</evidence>
<reference evidence="37 39" key="1">
    <citation type="journal article" date="1998" name="Am. J. Respir. Cell Mol. Biol.">
        <title>Evidence against a role of mouse, rat, and two cloned human T1alpha isoforms as a water channel or a regulator of aquaporin-type water channels.</title>
        <authorList>
            <person name="Ma T."/>
            <person name="Yang B."/>
            <person name="Matthay M.A."/>
            <person name="Verkman A.S."/>
        </authorList>
    </citation>
    <scope>NUCLEOTIDE SEQUENCE [MRNA] (ISOFORMS 1 AND 2)</scope>
    <scope>FUNCTION</scope>
    <scope>VARIANT GLY-147</scope>
</reference>
<reference evidence="37 44" key="2">
    <citation type="journal article" date="1999" name="Biochem. J.">
        <title>Cloning and characterization of gp36, a human mucin-type glycoprotein preferentially expressed in vascular endothelium.</title>
        <authorList>
            <person name="Zimmer G."/>
            <person name="Oeffner F."/>
            <person name="von Messling V."/>
            <person name="Tschernig T."/>
            <person name="Groene H.-J."/>
            <person name="Klenk H.-D."/>
            <person name="Herrler G."/>
        </authorList>
    </citation>
    <scope>NUCLEOTIDE SEQUENCE [MRNA] (ISOFORM 1)</scope>
    <scope>TISSUE SPECIFICITY</scope>
    <scope>GLYCOSYLATION</scope>
    <scope>VARIANT GLY-147</scope>
    <source>
        <tissue evidence="44">Placenta</tissue>
    </source>
</reference>
<reference evidence="37 41" key="3">
    <citation type="submission" date="2003-12" db="EMBL/GenBank/DDBJ databases">
        <authorList>
            <person name="Kato Y."/>
            <person name="Fujita N."/>
            <person name="Tsuruo T."/>
        </authorList>
    </citation>
    <scope>NUCLEOTIDE SEQUENCE [MRNA] (ISOFORM 1)</scope>
    <scope>VARIANT GLY-147</scope>
    <source>
        <tissue evidence="43">Lung</tissue>
    </source>
</reference>
<reference key="4">
    <citation type="journal article" date="2006" name="Nature">
        <title>The DNA sequence and biological annotation of human chromosome 1.</title>
        <authorList>
            <person name="Gregory S.G."/>
            <person name="Barlow K.F."/>
            <person name="McLay K.E."/>
            <person name="Kaul R."/>
            <person name="Swarbreck D."/>
            <person name="Dunham A."/>
            <person name="Scott C.E."/>
            <person name="Howe K.L."/>
            <person name="Woodfine K."/>
            <person name="Spencer C.C.A."/>
            <person name="Jones M.C."/>
            <person name="Gillson C."/>
            <person name="Searle S."/>
            <person name="Zhou Y."/>
            <person name="Kokocinski F."/>
            <person name="McDonald L."/>
            <person name="Evans R."/>
            <person name="Phillips K."/>
            <person name="Atkinson A."/>
            <person name="Cooper R."/>
            <person name="Jones C."/>
            <person name="Hall R.E."/>
            <person name="Andrews T.D."/>
            <person name="Lloyd C."/>
            <person name="Ainscough R."/>
            <person name="Almeida J.P."/>
            <person name="Ambrose K.D."/>
            <person name="Anderson F."/>
            <person name="Andrew R.W."/>
            <person name="Ashwell R.I.S."/>
            <person name="Aubin K."/>
            <person name="Babbage A.K."/>
            <person name="Bagguley C.L."/>
            <person name="Bailey J."/>
            <person name="Beasley H."/>
            <person name="Bethel G."/>
            <person name="Bird C.P."/>
            <person name="Bray-Allen S."/>
            <person name="Brown J.Y."/>
            <person name="Brown A.J."/>
            <person name="Buckley D."/>
            <person name="Burton J."/>
            <person name="Bye J."/>
            <person name="Carder C."/>
            <person name="Chapman J.C."/>
            <person name="Clark S.Y."/>
            <person name="Clarke G."/>
            <person name="Clee C."/>
            <person name="Cobley V."/>
            <person name="Collier R.E."/>
            <person name="Corby N."/>
            <person name="Coville G.J."/>
            <person name="Davies J."/>
            <person name="Deadman R."/>
            <person name="Dunn M."/>
            <person name="Earthrowl M."/>
            <person name="Ellington A.G."/>
            <person name="Errington H."/>
            <person name="Frankish A."/>
            <person name="Frankland J."/>
            <person name="French L."/>
            <person name="Garner P."/>
            <person name="Garnett J."/>
            <person name="Gay L."/>
            <person name="Ghori M.R.J."/>
            <person name="Gibson R."/>
            <person name="Gilby L.M."/>
            <person name="Gillett W."/>
            <person name="Glithero R.J."/>
            <person name="Grafham D.V."/>
            <person name="Griffiths C."/>
            <person name="Griffiths-Jones S."/>
            <person name="Grocock R."/>
            <person name="Hammond S."/>
            <person name="Harrison E.S.I."/>
            <person name="Hart E."/>
            <person name="Haugen E."/>
            <person name="Heath P.D."/>
            <person name="Holmes S."/>
            <person name="Holt K."/>
            <person name="Howden P.J."/>
            <person name="Hunt A.R."/>
            <person name="Hunt S.E."/>
            <person name="Hunter G."/>
            <person name="Isherwood J."/>
            <person name="James R."/>
            <person name="Johnson C."/>
            <person name="Johnson D."/>
            <person name="Joy A."/>
            <person name="Kay M."/>
            <person name="Kershaw J.K."/>
            <person name="Kibukawa M."/>
            <person name="Kimberley A.M."/>
            <person name="King A."/>
            <person name="Knights A.J."/>
            <person name="Lad H."/>
            <person name="Laird G."/>
            <person name="Lawlor S."/>
            <person name="Leongamornlert D.A."/>
            <person name="Lloyd D.M."/>
            <person name="Loveland J."/>
            <person name="Lovell J."/>
            <person name="Lush M.J."/>
            <person name="Lyne R."/>
            <person name="Martin S."/>
            <person name="Mashreghi-Mohammadi M."/>
            <person name="Matthews L."/>
            <person name="Matthews N.S.W."/>
            <person name="McLaren S."/>
            <person name="Milne S."/>
            <person name="Mistry S."/>
            <person name="Moore M.J.F."/>
            <person name="Nickerson T."/>
            <person name="O'Dell C.N."/>
            <person name="Oliver K."/>
            <person name="Palmeiri A."/>
            <person name="Palmer S.A."/>
            <person name="Parker A."/>
            <person name="Patel D."/>
            <person name="Pearce A.V."/>
            <person name="Peck A.I."/>
            <person name="Pelan S."/>
            <person name="Phelps K."/>
            <person name="Phillimore B.J."/>
            <person name="Plumb R."/>
            <person name="Rajan J."/>
            <person name="Raymond C."/>
            <person name="Rouse G."/>
            <person name="Saenphimmachak C."/>
            <person name="Sehra H.K."/>
            <person name="Sheridan E."/>
            <person name="Shownkeen R."/>
            <person name="Sims S."/>
            <person name="Skuce C.D."/>
            <person name="Smith M."/>
            <person name="Steward C."/>
            <person name="Subramanian S."/>
            <person name="Sycamore N."/>
            <person name="Tracey A."/>
            <person name="Tromans A."/>
            <person name="Van Helmond Z."/>
            <person name="Wall M."/>
            <person name="Wallis J.M."/>
            <person name="White S."/>
            <person name="Whitehead S.L."/>
            <person name="Wilkinson J.E."/>
            <person name="Willey D.L."/>
            <person name="Williams H."/>
            <person name="Wilming L."/>
            <person name="Wray P.W."/>
            <person name="Wu Z."/>
            <person name="Coulson A."/>
            <person name="Vaudin M."/>
            <person name="Sulston J.E."/>
            <person name="Durbin R.M."/>
            <person name="Hubbard T."/>
            <person name="Wooster R."/>
            <person name="Dunham I."/>
            <person name="Carter N.P."/>
            <person name="McVean G."/>
            <person name="Ross M.T."/>
            <person name="Harrow J."/>
            <person name="Olson M.V."/>
            <person name="Beck S."/>
            <person name="Rogers J."/>
            <person name="Bentley D.R."/>
        </authorList>
    </citation>
    <scope>NUCLEOTIDE SEQUENCE [LARGE SCALE GENOMIC DNA]</scope>
</reference>
<reference evidence="37 40" key="5">
    <citation type="journal article" date="2004" name="Genome Res.">
        <title>The status, quality, and expansion of the NIH full-length cDNA project: the Mammalian Gene Collection (MGC).</title>
        <authorList>
            <consortium name="The MGC Project Team"/>
        </authorList>
    </citation>
    <scope>NUCLEOTIDE SEQUENCE [LARGE SCALE MRNA] (ISOFORM 3)</scope>
    <scope>VARIANT GLY-147</scope>
    <source>
        <tissue evidence="40">Eye</tissue>
    </source>
</reference>
<reference evidence="37 42" key="6">
    <citation type="journal article" date="2005" name="Int. J. Cancer">
        <title>Characterization of human PA2.26 antigen (T1alpha-2, podoplanin), a small membrane mucin induced in oral squamous cell carcinomas.</title>
        <authorList>
            <person name="Martin-Villar E."/>
            <person name="Scholl F.G."/>
            <person name="Gamallo C."/>
            <person name="Yurrita M.M."/>
            <person name="Munoz-Guerra M."/>
            <person name="Cruces J."/>
            <person name="Quintanilla M."/>
        </authorList>
    </citation>
    <scope>NUCLEOTIDE SEQUENCE [MRNA] OF 10-162 (ISOFORM 3)</scope>
    <scope>FUNCTION</scope>
    <scope>TISSUE SPECIFICITY</scope>
    <scope>GLYCOSYLATION</scope>
</reference>
<reference key="7">
    <citation type="journal article" date="2004" name="Nat. Genet.">
        <title>Complete sequencing and characterization of 21,243 full-length human cDNAs.</title>
        <authorList>
            <person name="Ota T."/>
            <person name="Suzuki Y."/>
            <person name="Nishikawa T."/>
            <person name="Otsuki T."/>
            <person name="Sugiyama T."/>
            <person name="Irie R."/>
            <person name="Wakamatsu A."/>
            <person name="Hayashi K."/>
            <person name="Sato H."/>
            <person name="Nagai K."/>
            <person name="Kimura K."/>
            <person name="Makita H."/>
            <person name="Sekine M."/>
            <person name="Obayashi M."/>
            <person name="Nishi T."/>
            <person name="Shibahara T."/>
            <person name="Tanaka T."/>
            <person name="Ishii S."/>
            <person name="Yamamoto J."/>
            <person name="Saito K."/>
            <person name="Kawai Y."/>
            <person name="Isono Y."/>
            <person name="Nakamura Y."/>
            <person name="Nagahari K."/>
            <person name="Murakami K."/>
            <person name="Yasuda T."/>
            <person name="Iwayanagi T."/>
            <person name="Wagatsuma M."/>
            <person name="Shiratori A."/>
            <person name="Sudo H."/>
            <person name="Hosoiri T."/>
            <person name="Kaku Y."/>
            <person name="Kodaira H."/>
            <person name="Kondo H."/>
            <person name="Sugawara M."/>
            <person name="Takahashi M."/>
            <person name="Kanda K."/>
            <person name="Yokoi T."/>
            <person name="Furuya T."/>
            <person name="Kikkawa E."/>
            <person name="Omura Y."/>
            <person name="Abe K."/>
            <person name="Kamihara K."/>
            <person name="Katsuta N."/>
            <person name="Sato K."/>
            <person name="Tanikawa M."/>
            <person name="Yamazaki M."/>
            <person name="Ninomiya K."/>
            <person name="Ishibashi T."/>
            <person name="Yamashita H."/>
            <person name="Murakawa K."/>
            <person name="Fujimori K."/>
            <person name="Tanai H."/>
            <person name="Kimata M."/>
            <person name="Watanabe M."/>
            <person name="Hiraoka S."/>
            <person name="Chiba Y."/>
            <person name="Ishida S."/>
            <person name="Ono Y."/>
            <person name="Takiguchi S."/>
            <person name="Watanabe S."/>
            <person name="Yosida M."/>
            <person name="Hotuta T."/>
            <person name="Kusano J."/>
            <person name="Kanehori K."/>
            <person name="Takahashi-Fujii A."/>
            <person name="Hara H."/>
            <person name="Tanase T.-O."/>
            <person name="Nomura Y."/>
            <person name="Togiya S."/>
            <person name="Komai F."/>
            <person name="Hara R."/>
            <person name="Takeuchi K."/>
            <person name="Arita M."/>
            <person name="Imose N."/>
            <person name="Musashino K."/>
            <person name="Yuuki H."/>
            <person name="Oshima A."/>
            <person name="Sasaki N."/>
            <person name="Aotsuka S."/>
            <person name="Yoshikawa Y."/>
            <person name="Matsunawa H."/>
            <person name="Ichihara T."/>
            <person name="Shiohata N."/>
            <person name="Sano S."/>
            <person name="Moriya S."/>
            <person name="Momiyama H."/>
            <person name="Satoh N."/>
            <person name="Takami S."/>
            <person name="Terashima Y."/>
            <person name="Suzuki O."/>
            <person name="Nakagawa S."/>
            <person name="Senoh A."/>
            <person name="Mizoguchi H."/>
            <person name="Goto Y."/>
            <person name="Shimizu F."/>
            <person name="Wakebe H."/>
            <person name="Hishigaki H."/>
            <person name="Watanabe T."/>
            <person name="Sugiyama A."/>
            <person name="Takemoto M."/>
            <person name="Kawakami B."/>
            <person name="Yamazaki M."/>
            <person name="Watanabe K."/>
            <person name="Kumagai A."/>
            <person name="Itakura S."/>
            <person name="Fukuzumi Y."/>
            <person name="Fujimori Y."/>
            <person name="Komiyama M."/>
            <person name="Tashiro H."/>
            <person name="Tanigami A."/>
            <person name="Fujiwara T."/>
            <person name="Ono T."/>
            <person name="Yamada K."/>
            <person name="Fujii Y."/>
            <person name="Ozaki K."/>
            <person name="Hirao M."/>
            <person name="Ohmori Y."/>
            <person name="Kawabata A."/>
            <person name="Hikiji T."/>
            <person name="Kobatake N."/>
            <person name="Inagaki H."/>
            <person name="Ikema Y."/>
            <person name="Okamoto S."/>
            <person name="Okitani R."/>
            <person name="Kawakami T."/>
            <person name="Noguchi S."/>
            <person name="Itoh T."/>
            <person name="Shigeta K."/>
            <person name="Senba T."/>
            <person name="Matsumura K."/>
            <person name="Nakajima Y."/>
            <person name="Mizuno T."/>
            <person name="Morinaga M."/>
            <person name="Sasaki M."/>
            <person name="Togashi T."/>
            <person name="Oyama M."/>
            <person name="Hata H."/>
            <person name="Watanabe M."/>
            <person name="Komatsu T."/>
            <person name="Mizushima-Sugano J."/>
            <person name="Satoh T."/>
            <person name="Shirai Y."/>
            <person name="Takahashi Y."/>
            <person name="Nakagawa K."/>
            <person name="Okumura K."/>
            <person name="Nagase T."/>
            <person name="Nomura N."/>
            <person name="Kikuchi H."/>
            <person name="Masuho Y."/>
            <person name="Yamashita R."/>
            <person name="Nakai K."/>
            <person name="Yada T."/>
            <person name="Nakamura Y."/>
            <person name="Ohara O."/>
            <person name="Isogai T."/>
            <person name="Sugano S."/>
        </authorList>
    </citation>
    <scope>NUCLEOTIDE SEQUENCE [LARGE SCALE MRNA] OF 10-162 (ISOFORM 3)</scope>
    <scope>VARIANT GLY-147</scope>
    <source>
        <tissue>Brain</tissue>
    </source>
</reference>
<reference key="8">
    <citation type="journal article" date="2005" name="DNA Res.">
        <title>Signal sequence and keyword trap in silico for selection of full-length human cDNAs encoding secretion or membrane proteins from oligo-capped cDNA libraries.</title>
        <authorList>
            <person name="Otsuki T."/>
            <person name="Ota T."/>
            <person name="Nishikawa T."/>
            <person name="Hayashi K."/>
            <person name="Suzuki Y."/>
            <person name="Yamamoto J."/>
            <person name="Wakamatsu A."/>
            <person name="Kimura K."/>
            <person name="Sakamoto K."/>
            <person name="Hatano N."/>
            <person name="Kawai Y."/>
            <person name="Ishii S."/>
            <person name="Saito K."/>
            <person name="Kojima S."/>
            <person name="Sugiyama T."/>
            <person name="Ono T."/>
            <person name="Okano K."/>
            <person name="Yoshikawa Y."/>
            <person name="Aotsuka S."/>
            <person name="Sasaki N."/>
            <person name="Hattori A."/>
            <person name="Okumura K."/>
            <person name="Nagai K."/>
            <person name="Sugano S."/>
            <person name="Isogai T."/>
        </authorList>
    </citation>
    <scope>NUCLEOTIDE SEQUENCE [LARGE SCALE MRNA] OF 10-162 (ISOFORM 4)</scope>
    <scope>VARIANT GLY-147</scope>
</reference>
<reference evidence="37 41" key="9">
    <citation type="submission" date="2001-06" db="EMBL/GenBank/DDBJ databases">
        <title>Molecular cloning and characterization of human podoplanin, a small mucin-type glycoprotein of glomerular podocytes.</title>
        <authorList>
            <person name="Kowalski H."/>
            <person name="Kalt R."/>
            <person name="Auer H."/>
            <person name="Dontscho K."/>
        </authorList>
    </citation>
    <scope>NUCLEOTIDE SEQUENCE [MRNA] OF 16-162 (ISOFORM 3)</scope>
    <scope>VARIANT GLY-147</scope>
    <source>
        <tissue evidence="41">Kidney</tissue>
    </source>
</reference>
<reference key="10">
    <citation type="journal article" date="2007" name="FEBS Lett.">
        <title>Functional glycosylation of human podoplanin: glycan structure of platelet aggregation-inducing factor.</title>
        <authorList>
            <person name="Kaneko M.K."/>
            <person name="Kato Y."/>
            <person name="Kameyama A."/>
            <person name="Ito H."/>
            <person name="Kuno A."/>
            <person name="Hirabayashi J."/>
            <person name="Kubota T."/>
            <person name="Amano K."/>
            <person name="Chiba Y."/>
            <person name="Hasegawa Y."/>
            <person name="Sasagawa I."/>
            <person name="Mishima K."/>
            <person name="Narimatsu H."/>
        </authorList>
    </citation>
    <scope>PROTEIN SEQUENCE OF 23-57</scope>
    <scope>FUNCTION</scope>
    <scope>IDENTIFICATION BY MASS SPECTROMETRY</scope>
    <scope>GLYCOSYLATION AT THR-52</scope>
</reference>
<reference key="11">
    <citation type="journal article" date="2014" name="Int. J. Biochem. Cell Biol.">
        <title>Podoplanin is a substrate of presenilin-1/gamma-secretase.</title>
        <authorList>
            <person name="Yurrita M.M."/>
            <person name="Fernandez-Munoz B."/>
            <person name="Del Castillo G."/>
            <person name="Martin-Villar E."/>
            <person name="Renart J."/>
            <person name="Quintanilla M."/>
        </authorList>
    </citation>
    <scope>PROTEIN SEQUENCE OF 151-156</scope>
    <scope>PROTEOLYTIC CLEAVAGE</scope>
    <scope>SUBCELLULAR LOCATION</scope>
</reference>
<reference evidence="37" key="12">
    <citation type="journal article" date="2003" name="J. Biol. Chem.">
        <title>Molecular identification of aggrus/T1alpha as a platelet aggregation-inducing factor expressed in colorectal tumors.</title>
        <authorList>
            <person name="Kato Y."/>
            <person name="Fujita N."/>
            <person name="Kunita A."/>
            <person name="Sato S."/>
            <person name="Kaneko M."/>
            <person name="Osawa M."/>
            <person name="Tsuruo T."/>
        </authorList>
    </citation>
    <scope>FUNCTION</scope>
    <scope>TISSUE SPECIFICITY</scope>
    <scope>MUTAGENESIS OF THR-52</scope>
</reference>
<reference key="13">
    <citation type="journal article" date="2004" name="J. Am. Soc. Nephrol.">
        <title>Lymphatic neoangiogenesis in human kidney transplants is associated with immunologically active lymphocytic infiltrates.</title>
        <authorList>
            <person name="Kerjaschki D."/>
            <person name="Regele H.M."/>
            <person name="Moosberger I."/>
            <person name="Nagy-Bojarski K."/>
            <person name="Watschinger B."/>
            <person name="Soleiman A."/>
            <person name="Birner P."/>
            <person name="Krieger S."/>
            <person name="Hovorka A."/>
            <person name="Silberhumer G."/>
            <person name="Laakkonen P."/>
            <person name="Petrova T."/>
            <person name="Langer B."/>
            <person name="Raab I."/>
        </authorList>
    </citation>
    <scope>INTERACTION WITH CCL21</scope>
    <scope>SUBCELLULAR LOCATION</scope>
</reference>
<reference evidence="37" key="14">
    <citation type="journal article" date="2004" name="J. Biol. Chem.">
        <title>Functional sialylated O-glycan to platelet aggregation on Aggrus (T1alpha/Podoplanin) molecules expressed in Chinese hamster ovary cells.</title>
        <authorList>
            <person name="Kaneko M."/>
            <person name="Kato Y."/>
            <person name="Kunita A."/>
            <person name="Fujita N."/>
            <person name="Tsuruo T."/>
            <person name="Osawa M."/>
        </authorList>
    </citation>
    <scope>FUNCTION</scope>
    <scope>GLYCOSYLATION</scope>
</reference>
<reference key="15">
    <citation type="journal article" date="2006" name="J. Cell Sci.">
        <title>Podoplanin binds ERM proteins to activate RhoA and promote epithelial-mesenchymal transition.</title>
        <authorList>
            <person name="Martin-Villar E."/>
            <person name="Megias D."/>
            <person name="Castel S."/>
            <person name="Yurrita M.M."/>
            <person name="Vilaro S."/>
            <person name="Quintanilla M."/>
        </authorList>
    </citation>
    <scope>MUTAGENESIS OF 154-ARG--ARG-159; 154-ARG-LYS-155 AND ARG-159</scope>
    <scope>SUBCELLULAR LOCATION</scope>
    <scope>FUNCTION</scope>
    <scope>REGION</scope>
    <scope>INTERACTION WITH MSN AND EZR</scope>
</reference>
<reference key="16">
    <citation type="journal article" date="2007" name="J. Biol. Chem.">
        <title>Involvement of the snake toxin receptor CLEC-2, in podoplanin-mediated platelet activation, by cancer cells.</title>
        <authorList>
            <person name="Suzuki-Inoue K."/>
            <person name="Kato Y."/>
            <person name="Inoue O."/>
            <person name="Kaneko M.K."/>
            <person name="Mishima K."/>
            <person name="Yatomi Y."/>
            <person name="Yamazaki Y."/>
            <person name="Narimatsu H."/>
            <person name="Ozaki Y."/>
        </authorList>
    </citation>
    <scope>FUNCTION</scope>
    <scope>INTERACTION WITH CLEC1B</scope>
</reference>
<reference key="17">
    <citation type="journal article" date="2008" name="Biochem. J.">
        <title>Renal cells activate the platelet receptor CLEC-2 through podoplanin.</title>
        <authorList>
            <person name="Christou C.M."/>
            <person name="Pearce A.C."/>
            <person name="Watson A.A."/>
            <person name="Mistry A.R."/>
            <person name="Pollitt A.Y."/>
            <person name="Fenton-May A.E."/>
            <person name="Johnson L.A."/>
            <person name="Jackson D.G."/>
            <person name="Watson S.P."/>
            <person name="O'Callaghan C.A."/>
        </authorList>
    </citation>
    <scope>FUNCTION</scope>
    <scope>INTERACTION WITH CLEC1B</scope>
    <scope>SUBCELLULAR LOCATION</scope>
</reference>
<reference key="18">
    <citation type="journal article" date="2008" name="Blood">
        <title>Tetraspanin family member CD9 inhibits Aggrus/podoplanin-induced platelet aggregation and suppresses pulmonary metastasis.</title>
        <authorList>
            <person name="Nakazawa Y."/>
            <person name="Sato S."/>
            <person name="Naito M."/>
            <person name="Kato Y."/>
            <person name="Mishima K."/>
            <person name="Arai H."/>
            <person name="Tsuruo T."/>
            <person name="Fujita N."/>
        </authorList>
    </citation>
    <scope>INTERACTION WITH CD9</scope>
    <scope>SUBCELLULAR LOCATION</scope>
    <scope>FUNCTION</scope>
</reference>
<reference key="19">
    <citation type="journal article" date="2009" name="Exp. Cell Res.">
        <title>Galectin-8 interacts with podoplanin and modulates lymphatic endothelial cell functions.</title>
        <authorList>
            <person name="Cueni L.N."/>
            <person name="Detmar M."/>
        </authorList>
    </citation>
    <scope>INTERACTION WITH LGALS8</scope>
    <scope>FUNCTION</scope>
</reference>
<reference key="20">
    <citation type="journal article" date="2010" name="Mol. Biol. Cell">
        <title>Podoplanin associates with CD44 to promote directional cell migration.</title>
        <authorList>
            <person name="Martin-Villar E."/>
            <person name="Fernandez-Munoz B."/>
            <person name="Parsons M."/>
            <person name="Yurrita M.M."/>
            <person name="Megias D."/>
            <person name="Perez-Gomez E."/>
            <person name="Jones G.E."/>
            <person name="Quintanilla M."/>
        </authorList>
    </citation>
    <scope>SUBCELLULAR LOCATION</scope>
    <scope>INTERACTION WITH CD44</scope>
    <scope>MUTAGENESIS OF 154-ARG--ARG-159</scope>
    <scope>FUNCTION</scope>
</reference>
<reference key="21">
    <citation type="journal article" date="2011" name="Int. J. Biochem. Cell Biol.">
        <title>The transmembrane domain of podoplanin is required for its association with lipid rafts and the induction of epithelial-mesenchymal transition.</title>
        <authorList>
            <person name="Fernandez-Munoz B."/>
            <person name="Yurrita M.M."/>
            <person name="Martin-Villar E."/>
            <person name="Carrasco-Ramirez P."/>
            <person name="Megias D."/>
            <person name="Renart J."/>
            <person name="Quintanilla M."/>
        </authorList>
    </citation>
    <scope>SUBCELLULAR LOCATION</scope>
    <scope>MUTAGENESIS OF GLY-137</scope>
    <scope>FUNCTION</scope>
    <scope>REGION</scope>
    <scope>SUBUNIT</scope>
</reference>
<reference key="22">
    <citation type="journal article" date="2013" name="Biochem. Biophys. Res. Commun.">
        <title>Extracellular heat shock protein A9 is a novel interaction partner of podoplanin in oral squamous cell carcinoma cells.</title>
        <authorList>
            <person name="Tsuneki M."/>
            <person name="Maruyama S."/>
            <person name="Yamazaki M."/>
            <person name="Xu B."/>
            <person name="Essa A."/>
            <person name="Abe T."/>
            <person name="Babkair H."/>
            <person name="Cheng J."/>
            <person name="Yamamoto T."/>
            <person name="Saku T."/>
        </authorList>
    </citation>
    <scope>INTERACTION WITH HSPA9</scope>
</reference>
<reference key="23">
    <citation type="journal article" date="2015" name="Oncogene">
        <title>Podoplanin mediates ECM degradation by squamous carcinoma cells through control of invadopodia stability.</title>
        <authorList>
            <person name="Martin-Villar E."/>
            <person name="Borda-d'Agua B."/>
            <person name="Carrasco-Ramirez P."/>
            <person name="Renart J."/>
            <person name="Parsons M."/>
            <person name="Quintanilla M."/>
            <person name="Jones G.E."/>
        </authorList>
    </citation>
    <scope>SUBCELLULAR LOCATION</scope>
    <scope>FUNCTION</scope>
    <scope>MUTAGENESIS OF GLY-137 AND 154-ARG--ARG-159</scope>
    <scope>DOMAIN</scope>
</reference>
<reference evidence="45" key="24">
    <citation type="journal article" date="2014" name="Structure">
        <title>A platform of C-type lectin-like receptor CLEC-2 for binding O-glycosylated podoplanin and nonglycosylated rhodocytin.</title>
        <authorList>
            <person name="Nagae M."/>
            <person name="Morita-Matsumoto K."/>
            <person name="Kato M."/>
            <person name="Kaneko M.K."/>
            <person name="Kato Y."/>
            <person name="Yamaguchi Y."/>
        </authorList>
    </citation>
    <scope>X-RAY CRYSTALLOGRAPHY (1.91 ANGSTROMS) OF 38-54 IN COMPLEX WITH CLEC1B</scope>
    <scope>GLYCOSYLATION AT THR-52</scope>
</reference>
<reference evidence="46" key="25">
    <citation type="journal article" date="2016" name="J. Cell Sci.">
        <title>Tailored placement of a turn-forming PA tag into the structured domain of a protein to probe its conformational state.</title>
        <authorList>
            <person name="Fujii Y."/>
            <person name="Matsunaga Y."/>
            <person name="Arimori T."/>
            <person name="Kitago Y."/>
            <person name="Ogasawara S."/>
            <person name="Kaneko M.K."/>
            <person name="Kato Y."/>
            <person name="Takagi J."/>
        </authorList>
    </citation>
    <scope>X-RAY CRYSTALLOGRAPHY (1.56 ANGSTROMS) OF 38-51</scope>
</reference>
<organism>
    <name type="scientific">Homo sapiens</name>
    <name type="common">Human</name>
    <dbReference type="NCBI Taxonomy" id="9606"/>
    <lineage>
        <taxon>Eukaryota</taxon>
        <taxon>Metazoa</taxon>
        <taxon>Chordata</taxon>
        <taxon>Craniata</taxon>
        <taxon>Vertebrata</taxon>
        <taxon>Euteleostomi</taxon>
        <taxon>Mammalia</taxon>
        <taxon>Eutheria</taxon>
        <taxon>Euarchontoglires</taxon>
        <taxon>Primates</taxon>
        <taxon>Haplorrhini</taxon>
        <taxon>Catarrhini</taxon>
        <taxon>Hominidae</taxon>
        <taxon>Homo</taxon>
    </lineage>
</organism>
<protein>
    <recommendedName>
        <fullName evidence="36">Podoplanin</fullName>
    </recommendedName>
    <alternativeName>
        <fullName evidence="35">Aggrus</fullName>
    </alternativeName>
    <alternativeName>
        <fullName>Glycoprotein 36</fullName>
        <shortName evidence="28">Gp36</shortName>
    </alternativeName>
    <alternativeName>
        <fullName evidence="31">PA2.26 antigen</fullName>
    </alternativeName>
    <alternativeName>
        <fullName evidence="2">T1-alpha</fullName>
        <shortName evidence="2">T1A</shortName>
    </alternativeName>
    <component>
        <recommendedName>
            <fullName evidence="33">29kDa cytosolic podoplanin intracellular domain</fullName>
            <shortName evidence="33">PICD</shortName>
        </recommendedName>
    </component>
</protein>
<gene>
    <name evidence="40" type="primary">PDPN</name>
    <name evidence="28" type="synonym">GP36</name>
    <name type="ORF">PSEC0003</name>
    <name type="ORF">PSEC0025</name>
</gene>
<feature type="signal peptide" evidence="14">
    <location>
        <begin position="1"/>
        <end position="22"/>
    </location>
</feature>
<feature type="chain" id="PRO_0000223875" description="Podoplanin">
    <location>
        <begin position="23"/>
        <end position="162"/>
    </location>
</feature>
<feature type="peptide" id="PRO_0000442187" description="29kDa cytosolic podoplanin intracellular domain" evidence="22">
    <location>
        <begin position="151"/>
        <end position="162"/>
    </location>
</feature>
<feature type="topological domain" description="Extracellular" evidence="3">
    <location>
        <begin position="23"/>
        <end position="131"/>
    </location>
</feature>
<feature type="transmembrane region" description="Helical" evidence="3">
    <location>
        <begin position="132"/>
        <end position="152"/>
    </location>
</feature>
<feature type="topological domain" description="Cytoplasmic" evidence="3">
    <location>
        <begin position="153"/>
        <end position="162"/>
    </location>
</feature>
<feature type="region of interest" description="Disordered" evidence="4">
    <location>
        <begin position="23"/>
        <end position="57"/>
    </location>
</feature>
<feature type="region of interest" description="Disordered" evidence="4">
    <location>
        <begin position="85"/>
        <end position="119"/>
    </location>
</feature>
<feature type="region of interest" description="Requires for dimerization and lipid rafts association" evidence="20">
    <location>
        <begin position="133"/>
        <end position="137"/>
    </location>
</feature>
<feature type="region of interest" description="Requires for interaction with MSN and EZR" evidence="13">
    <location>
        <begin position="154"/>
        <end position="155"/>
    </location>
</feature>
<feature type="compositionally biased region" description="Polar residues" evidence="4">
    <location>
        <begin position="85"/>
        <end position="108"/>
    </location>
</feature>
<feature type="compositionally biased region" description="Basic and acidic residues" evidence="4">
    <location>
        <begin position="109"/>
        <end position="119"/>
    </location>
</feature>
<feature type="site" description="Cleavage; by gamma-secretase" evidence="22">
    <location>
        <begin position="150"/>
        <end position="151"/>
    </location>
</feature>
<feature type="glycosylation site" description="O-linked (GalNAc...) threonine" evidence="3">
    <location>
        <position position="25"/>
    </location>
</feature>
<feature type="glycosylation site" description="O-linked (GalNAc...) threonine" evidence="3">
    <location>
        <position position="32"/>
    </location>
</feature>
<feature type="glycosylation site" description="O-linked (GalNAc...) threonine" evidence="3">
    <location>
        <position position="34"/>
    </location>
</feature>
<feature type="glycosylation site" description="O-linked (GalNAc...) threonine" evidence="3">
    <location>
        <position position="35"/>
    </location>
</feature>
<feature type="glycosylation site" description="O-linked (GalNAc...) threonine" evidence="14 23">
    <location>
        <position position="52"/>
    </location>
</feature>
<feature type="glycosylation site" description="O-linked (GalNAc...) threonine" evidence="3">
    <location>
        <position position="55"/>
    </location>
</feature>
<feature type="glycosylation site" description="O-linked (GalNAc...) threonine" evidence="3">
    <location>
        <position position="65"/>
    </location>
</feature>
<feature type="glycosylation site" description="O-linked (GalNAc...) threonine" evidence="3">
    <location>
        <position position="66"/>
    </location>
</feature>
<feature type="glycosylation site" description="O-linked (GalNAc...) threonine" evidence="3">
    <location>
        <position position="76"/>
    </location>
</feature>
<feature type="glycosylation site" description="O-linked (GalNAc...) threonine" evidence="3">
    <location>
        <position position="85"/>
    </location>
</feature>
<feature type="glycosylation site" description="O-linked (GalNAc...) serine" evidence="3">
    <location>
        <position position="86"/>
    </location>
</feature>
<feature type="glycosylation site" description="O-linked (GalNAc...) serine" evidence="3">
    <location>
        <position position="88"/>
    </location>
</feature>
<feature type="glycosylation site" description="O-linked (GalNAc...) threonine" evidence="3">
    <location>
        <position position="89"/>
    </location>
</feature>
<feature type="glycosylation site" description="O-linked (GalNAc...) serine" evidence="3">
    <location>
        <position position="96"/>
    </location>
</feature>
<feature type="glycosylation site" description="O-linked (GalNAc...) serine" evidence="3">
    <location>
        <position position="98"/>
    </location>
</feature>
<feature type="glycosylation site" description="O-linked (GalNAc...) threonine" evidence="3">
    <location>
        <position position="100"/>
    </location>
</feature>
<feature type="glycosylation site" description="O-linked (GalNAc...) serine" evidence="3">
    <location>
        <position position="102"/>
    </location>
</feature>
<feature type="glycosylation site" description="O-linked (GalNAc...) threonine" evidence="3">
    <location>
        <position position="106"/>
    </location>
</feature>
<feature type="glycosylation site" description="O-linked (GalNAc...) serine" evidence="3">
    <location>
        <position position="107"/>
    </location>
</feature>
<feature type="glycosylation site" description="O-linked (GalNAc...) serine" evidence="3">
    <location>
        <position position="109"/>
    </location>
</feature>
<feature type="glycosylation site" description="O-linked (GalNAc...) threonine" evidence="3">
    <location>
        <position position="110"/>
    </location>
</feature>
<feature type="glycosylation site" description="O-linked (GalNAc...) threonine" evidence="3">
    <location>
        <position position="117"/>
    </location>
</feature>
<feature type="glycosylation site" description="O-linked (GalNAc...) threonine" evidence="3">
    <location>
        <position position="119"/>
    </location>
</feature>
<feature type="glycosylation site" description="O-linked (GalNAc...) threonine" evidence="3">
    <location>
        <position position="120"/>
    </location>
</feature>
<feature type="splice variant" id="VSP_051949" description="In isoform 2." evidence="34">
    <location>
        <begin position="1"/>
        <end position="100"/>
    </location>
</feature>
<feature type="splice variant" id="VSP_046799" description="In isoform 5 and isoform 6." evidence="37">
    <location>
        <begin position="1"/>
        <end position="42"/>
    </location>
</feature>
<feature type="splice variant" id="VSP_035753" description="In isoform 3 and isoform 4." evidence="29 30 31 32 36">
    <original>M</original>
    <variation>MLTPLGKFSTAKFAVRLPRVWEARAPSLSGAPAPTPPAPPPSRSSRLGLWPRCFLIFPQLRILLLGPQESNNSTGTM</variation>
    <location>
        <position position="1"/>
    </location>
</feature>
<feature type="splice variant" id="VSP_051950" description="In isoform 2." evidence="34">
    <original>ASNVATSHSTEKVDGDTQTTVEK</original>
    <variation>MLHILSPMYFFLWGSCFFPLSSS</variation>
    <location>
        <begin position="101"/>
        <end position="123"/>
    </location>
</feature>
<feature type="splice variant" id="VSP_035754" description="In isoform 4." evidence="32">
    <original>YSP</original>
    <variation>P</variation>
    <location>
        <begin position="160"/>
        <end position="162"/>
    </location>
</feature>
<feature type="splice variant" id="VSP_046800" description="In isoform 5." evidence="37">
    <location>
        <begin position="160"/>
        <end position="161"/>
    </location>
</feature>
<feature type="splice variant" id="VSP_051951" description="In isoform 2." evidence="34">
    <original>P</original>
    <variation>EVNSLHPCDRQMKAIVSRTQIFELIEISDISWVWWLVPVVSAAGQLQTSLGNIVRPCLKKIISGTMVMFQSSLLGPLECSGSHLESQCFERLRRQEVHLCPGI</variation>
    <location>
        <position position="162"/>
    </location>
</feature>
<feature type="sequence variant" id="VAR_028015" description="In dbSNP:rs2486188.">
    <original>A</original>
    <variation>G</variation>
    <location>
        <position position="105"/>
    </location>
</feature>
<feature type="sequence variant" id="VAR_028016" description="In dbSNP:rs2486188." evidence="5 7 10 12 25 26 27">
    <original>A</original>
    <variation>G</variation>
    <location>
        <position position="147"/>
    </location>
</feature>
<feature type="mutagenesis site" description="Eliminates induction of platelet aggregation." evidence="6">
    <original>T</original>
    <variation>A</variation>
    <location>
        <position position="52"/>
    </location>
</feature>
<feature type="mutagenesis site" description="Prevents self-assembly and association to lipid rafts. Reduces the recruitment to invadopodium. Disrupts assembly into adhesion rings. Fails invadopodia-mediated ECM degradation." evidence="20 24">
    <location>
        <position position="137"/>
    </location>
</feature>
<feature type="mutagenesis site" description="Does not affect localization at cell surface protrusions. Does not induce reorganization of the actin cytoskeleton. Increases cell migration collectively. Does not significant change RHOA activation. No effect on interaction with CD44. Impairs interaction with the EZR and MSN. Impairs epithelial to mesenchymal transition. Does not change localization at invadopodium. Fails to assemble into rings. Fails invadopodia-mediated ECM degradation." evidence="13 19 24">
    <original>RKMSGR</original>
    <variation>QNMGSN</variation>
    <location>
        <begin position="154"/>
        <end position="159"/>
    </location>
</feature>
<feature type="mutagenesis site" description="Impairs interaction with the EZR and MSN. Impairs epithelial to mesenchymal transition. Does not affect localization at cell surface protrusions. Does not induce reorganization of the actin cytoskeleton. Increases cell migration collectively." evidence="13">
    <original>RK</original>
    <variation>QN</variation>
    <location>
        <begin position="154"/>
        <end position="155"/>
    </location>
</feature>
<feature type="mutagenesis site" description="Highly decreases interaction with the EZR and MSN. Induces an intermediate phenotype between epithelial and mesenchymal. Does not affect localization at cell surface protrusions. Induces reorganization of the actin cytoskeleton oncomitantly with the induced morphological changes. Increases cell migration individually. Increases invasiveness. Enhances RHOA activity. Colocalizes at cell-surface protrusions with RHOA and RAC1." evidence="13">
    <original>R</original>
    <variation>N</variation>
    <location>
        <position position="159"/>
    </location>
</feature>
<feature type="sequence conflict" description="In Ref. 8; BAC11557." evidence="37" ref="8">
    <original>E</original>
    <variation>K</variation>
    <location>
        <position position="57"/>
    </location>
</feature>
<accession>Q86YL7</accession>
<accession>A9Z1Y2</accession>
<accession>B2R6J8</accession>
<accession>E9PB68</accession>
<accession>F6QWX5</accession>
<accession>O60836</accession>
<accession>O95128</accession>
<accession>Q7L375</accession>
<accession>Q8NBQ8</accession>
<accession>Q8NBR3</accession>